<geneLocation type="plasmid">
    <name>pSymA</name>
    <name>megaplasmid 1</name>
</geneLocation>
<dbReference type="EC" id="2.3.1.-"/>
<dbReference type="EMBL" id="X01649">
    <property type="protein sequence ID" value="CAA25808.1"/>
    <property type="molecule type" value="Genomic_DNA"/>
</dbReference>
<dbReference type="EMBL" id="X01649">
    <property type="protein sequence ID" value="CAA25807.1"/>
    <property type="status" value="ALT_INIT"/>
    <property type="molecule type" value="Genomic_DNA"/>
</dbReference>
<dbReference type="EMBL" id="M11268">
    <property type="protein sequence ID" value="AAA98360.1"/>
    <property type="molecule type" value="Genomic_DNA"/>
</dbReference>
<dbReference type="EMBL" id="AF038577">
    <property type="protein sequence ID" value="AAB95328.1"/>
    <property type="molecule type" value="Genomic_DNA"/>
</dbReference>
<dbReference type="EMBL" id="AE006469">
    <property type="protein sequence ID" value="AAK65133.1"/>
    <property type="molecule type" value="Genomic_DNA"/>
</dbReference>
<dbReference type="PIR" id="A03480">
    <property type="entry name" value="ZZZRAM"/>
</dbReference>
<dbReference type="PIR" id="A03481">
    <property type="entry name" value="ZZZRA4"/>
</dbReference>
<dbReference type="PIR" id="C95321">
    <property type="entry name" value="C95321"/>
</dbReference>
<dbReference type="RefSeq" id="NP_435721.1">
    <property type="nucleotide sequence ID" value="NC_003037.1"/>
</dbReference>
<dbReference type="RefSeq" id="WP_010967455.1">
    <property type="nucleotide sequence ID" value="NC_003037.1"/>
</dbReference>
<dbReference type="SMR" id="P02962"/>
<dbReference type="EnsemblBacteria" id="AAK65133">
    <property type="protein sequence ID" value="AAK65133"/>
    <property type="gene ID" value="SMa0869"/>
</dbReference>
<dbReference type="KEGG" id="sme:SMa0869"/>
<dbReference type="PATRIC" id="fig|266834.11.peg.486"/>
<dbReference type="HOGENOM" id="CLU_098284_0_0_5"/>
<dbReference type="OrthoDB" id="3573574at2"/>
<dbReference type="Proteomes" id="UP000001976">
    <property type="component" value="Plasmid pSymA"/>
</dbReference>
<dbReference type="GO" id="GO:0005829">
    <property type="term" value="C:cytosol"/>
    <property type="evidence" value="ECO:0007669"/>
    <property type="project" value="InterPro"/>
</dbReference>
<dbReference type="GO" id="GO:0016746">
    <property type="term" value="F:acyltransferase activity"/>
    <property type="evidence" value="ECO:0007669"/>
    <property type="project" value="UniProtKB-UniRule"/>
</dbReference>
<dbReference type="Gene3D" id="3.40.630.30">
    <property type="match status" value="1"/>
</dbReference>
<dbReference type="HAMAP" id="MF_00084">
    <property type="entry name" value="NodA"/>
    <property type="match status" value="1"/>
</dbReference>
<dbReference type="InterPro" id="IPR003484">
    <property type="entry name" value="NodA"/>
</dbReference>
<dbReference type="InterPro" id="IPR020567">
    <property type="entry name" value="Nodulation_prot_NodA_CS"/>
</dbReference>
<dbReference type="NCBIfam" id="TIGR04245">
    <property type="entry name" value="nodulat_NodA"/>
    <property type="match status" value="1"/>
</dbReference>
<dbReference type="NCBIfam" id="NF001974">
    <property type="entry name" value="PRK00756.1"/>
    <property type="match status" value="1"/>
</dbReference>
<dbReference type="Pfam" id="PF02474">
    <property type="entry name" value="NodA"/>
    <property type="match status" value="1"/>
</dbReference>
<dbReference type="PROSITE" id="PS01349">
    <property type="entry name" value="NODA"/>
    <property type="match status" value="1"/>
</dbReference>
<protein>
    <recommendedName>
        <fullName>Nodulation protein A</fullName>
        <ecNumber>2.3.1.-</ecNumber>
    </recommendedName>
</protein>
<reference key="1">
    <citation type="journal article" date="1985" name="DNA">
        <title>Nucleotide sequence of Rhizobium meliloti 1021 nodulation genes: nodD is read divergently from nodABC.</title>
        <authorList>
            <person name="Egelhoff T.T."/>
            <person name="Fisher R.F."/>
            <person name="Jacobs T.W."/>
            <person name="Mulligan J.T."/>
            <person name="Long S.R."/>
        </authorList>
    </citation>
    <scope>NUCLEOTIDE SEQUENCE [GENOMIC DNA]</scope>
    <source>
        <strain>1021</strain>
    </source>
</reference>
<reference key="2">
    <citation type="journal article" date="1984" name="Nucleic Acids Res.">
        <title>Nucleotide sequence of Rhizobium meliloti nodulation genes.</title>
        <authorList>
            <person name="Toeroek I."/>
            <person name="Kondorosi E."/>
            <person name="Stepkowski T."/>
            <person name="Posfai J."/>
            <person name="Kondorosi A."/>
        </authorList>
    </citation>
    <scope>NUCLEOTIDE SEQUENCE [GENOMIC DNA]</scope>
    <source>
        <strain>41</strain>
    </source>
</reference>
<reference key="3">
    <citation type="submission" date="1997-12" db="EMBL/GenBank/DDBJ databases">
        <title>The complete sequence of S. meliloti 042B nodABC.</title>
        <authorList>
            <person name="Yang X."/>
            <person name="Gao W.M."/>
            <person name="Yang S.S."/>
        </authorList>
    </citation>
    <scope>NUCLEOTIDE SEQUENCE [GENOMIC DNA]</scope>
    <source>
        <strain>042B</strain>
    </source>
</reference>
<reference key="4">
    <citation type="journal article" date="2001" name="Proc. Natl. Acad. Sci. U.S.A.">
        <title>Nucleotide sequence and predicted functions of the entire Sinorhizobium meliloti pSymA megaplasmid.</title>
        <authorList>
            <person name="Barnett M.J."/>
            <person name="Fisher R.F."/>
            <person name="Jones T."/>
            <person name="Komp C."/>
            <person name="Abola A.P."/>
            <person name="Barloy-Hubler F."/>
            <person name="Bowser L."/>
            <person name="Capela D."/>
            <person name="Galibert F."/>
            <person name="Gouzy J."/>
            <person name="Gurjal M."/>
            <person name="Hong A."/>
            <person name="Huizar L."/>
            <person name="Hyman R.W."/>
            <person name="Kahn D."/>
            <person name="Kahn M.L."/>
            <person name="Kalman S."/>
            <person name="Keating D.H."/>
            <person name="Palm C."/>
            <person name="Peck M.C."/>
            <person name="Surzycki R."/>
            <person name="Wells D.H."/>
            <person name="Yeh K.-C."/>
            <person name="Davis R.W."/>
            <person name="Federspiel N.A."/>
            <person name="Long S.R."/>
        </authorList>
    </citation>
    <scope>NUCLEOTIDE SEQUENCE [LARGE SCALE GENOMIC DNA]</scope>
    <source>
        <strain>1021</strain>
    </source>
</reference>
<reference key="5">
    <citation type="journal article" date="2001" name="Science">
        <title>The composite genome of the legume symbiont Sinorhizobium meliloti.</title>
        <authorList>
            <person name="Galibert F."/>
            <person name="Finan T.M."/>
            <person name="Long S.R."/>
            <person name="Puehler A."/>
            <person name="Abola P."/>
            <person name="Ampe F."/>
            <person name="Barloy-Hubler F."/>
            <person name="Barnett M.J."/>
            <person name="Becker A."/>
            <person name="Boistard P."/>
            <person name="Bothe G."/>
            <person name="Boutry M."/>
            <person name="Bowser L."/>
            <person name="Buhrmester J."/>
            <person name="Cadieu E."/>
            <person name="Capela D."/>
            <person name="Chain P."/>
            <person name="Cowie A."/>
            <person name="Davis R.W."/>
            <person name="Dreano S."/>
            <person name="Federspiel N.A."/>
            <person name="Fisher R.F."/>
            <person name="Gloux S."/>
            <person name="Godrie T."/>
            <person name="Goffeau A."/>
            <person name="Golding B."/>
            <person name="Gouzy J."/>
            <person name="Gurjal M."/>
            <person name="Hernandez-Lucas I."/>
            <person name="Hong A."/>
            <person name="Huizar L."/>
            <person name="Hyman R.W."/>
            <person name="Jones T."/>
            <person name="Kahn D."/>
            <person name="Kahn M.L."/>
            <person name="Kalman S."/>
            <person name="Keating D.H."/>
            <person name="Kiss E."/>
            <person name="Komp C."/>
            <person name="Lelaure V."/>
            <person name="Masuy D."/>
            <person name="Palm C."/>
            <person name="Peck M.C."/>
            <person name="Pohl T.M."/>
            <person name="Portetelle D."/>
            <person name="Purnelle B."/>
            <person name="Ramsperger U."/>
            <person name="Surzycki R."/>
            <person name="Thebault P."/>
            <person name="Vandenbol M."/>
            <person name="Vorhoelter F.J."/>
            <person name="Weidner S."/>
            <person name="Wells D.H."/>
            <person name="Wong K."/>
            <person name="Yeh K.-C."/>
            <person name="Batut J."/>
        </authorList>
    </citation>
    <scope>NUCLEOTIDE SEQUENCE [LARGE SCALE GENOMIC DNA]</scope>
    <source>
        <strain>1021</strain>
    </source>
</reference>
<reference key="6">
    <citation type="journal article" date="1996" name="Mol. Microbiol.">
        <title>The NodA proteins of Rhizobium meliloti and Rhizobium tropici specify the N-acylation of Nod factors by different fatty acids.</title>
        <authorList>
            <person name="Debelle F."/>
            <person name="Plazanet C."/>
            <person name="Roche P."/>
            <person name="Pujol C."/>
            <person name="Savagnac A."/>
            <person name="Rosenberg C."/>
            <person name="Prome J.-C."/>
            <person name="Denarie J."/>
        </authorList>
    </citation>
    <scope>CHARACTERIZATION</scope>
</reference>
<keyword id="KW-0012">Acyltransferase</keyword>
<keyword id="KW-0963">Cytoplasm</keyword>
<keyword id="KW-0536">Nodulation</keyword>
<keyword id="KW-0614">Plasmid</keyword>
<keyword id="KW-1185">Reference proteome</keyword>
<keyword id="KW-0808">Transferase</keyword>
<sequence>MSLKVQWKLCWENQLERADHQELSEFFRKSYGPTGAFHAKPFEGGRSWAGARPERRAIAYDSVGIASHMGVLRRFIKVGETDLLVAELGLYAVRPDLERMGIAHSVGALTPTLRELGVPFAFGTVRHAMRNHVERYCQNGMASILTGVRVRSSIAEVNADLPSTRTEDPLVVIFPVGRPLNEWPPGTLIERNGSEL</sequence>
<name>NODA_RHIME</name>
<proteinExistence type="evidence at protein level"/>
<comment type="function">
    <text>N-acyltransferase required for nodulation. Acts in the production of a small, heat-stable compound (nod) that stimulates mitosis in various plant protoplasts. The N-acyl substituent is a C16 unsaturated or an omega-1 hydroxylated fatty acid in R.meliloti.</text>
</comment>
<comment type="subcellular location">
    <subcellularLocation>
        <location>Cytoplasm</location>
    </subcellularLocation>
</comment>
<comment type="similarity">
    <text evidence="1">Belongs to the NodA family.</text>
</comment>
<comment type="sequence caution" evidence="1">
    <conflict type="erroneous initiation">
        <sequence resource="EMBL-CDS" id="CAA25807"/>
    </conflict>
</comment>
<gene>
    <name type="primary">nodA</name>
    <name type="ordered locus">RA0475</name>
    <name type="ORF">SMa0869</name>
</gene>
<feature type="chain" id="PRO_0000196342" description="Nodulation protein A">
    <location>
        <begin position="1"/>
        <end position="196"/>
    </location>
</feature>
<feature type="sequence variant" description="In strain: 042B.">
    <original>E</original>
    <variation>K</variation>
    <location>
        <position position="87"/>
    </location>
</feature>
<feature type="sequence conflict" description="In Ref. 2; AAA98360." evidence="1" ref="2">
    <original>EL</original>
    <variation>AI</variation>
    <location>
        <begin position="115"/>
        <end position="116"/>
    </location>
</feature>
<accession>P02962</accession>
<accession>O52476</accession>
<accession>Q52970</accession>
<evidence type="ECO:0000305" key="1"/>
<organism>
    <name type="scientific">Rhizobium meliloti (strain 1021)</name>
    <name type="common">Ensifer meliloti</name>
    <name type="synonym">Sinorhizobium meliloti</name>
    <dbReference type="NCBI Taxonomy" id="266834"/>
    <lineage>
        <taxon>Bacteria</taxon>
        <taxon>Pseudomonadati</taxon>
        <taxon>Pseudomonadota</taxon>
        <taxon>Alphaproteobacteria</taxon>
        <taxon>Hyphomicrobiales</taxon>
        <taxon>Rhizobiaceae</taxon>
        <taxon>Sinorhizobium/Ensifer group</taxon>
        <taxon>Sinorhizobium</taxon>
    </lineage>
</organism>